<keyword id="KW-0053">Apoptosis</keyword>
<keyword id="KW-0067">ATP-binding</keyword>
<keyword id="KW-1003">Cell membrane</keyword>
<keyword id="KW-1015">Disulfide bond</keyword>
<keyword id="KW-0325">Glycoprotein</keyword>
<keyword id="KW-0393">Immunoglobulin domain</keyword>
<keyword id="KW-0418">Kinase</keyword>
<keyword id="KW-0472">Membrane</keyword>
<keyword id="KW-0547">Nucleotide-binding</keyword>
<keyword id="KW-0597">Phosphoprotein</keyword>
<keyword id="KW-0675">Receptor</keyword>
<keyword id="KW-0677">Repeat</keyword>
<keyword id="KW-0732">Signal</keyword>
<keyword id="KW-0808">Transferase</keyword>
<keyword id="KW-0812">Transmembrane</keyword>
<keyword id="KW-1133">Transmembrane helix</keyword>
<keyword id="KW-0829">Tyrosine-protein kinase</keyword>
<name>FGFR3_PLEWA</name>
<feature type="signal peptide" evidence="2">
    <location>
        <begin position="1"/>
        <end position="19"/>
    </location>
</feature>
<feature type="chain" id="PRO_0000249218" description="Fibroblast growth factor receptor 3">
    <location>
        <begin position="20"/>
        <end position="796"/>
    </location>
</feature>
<feature type="topological domain" description="Extracellular" evidence="2">
    <location>
        <begin position="20"/>
        <end position="358"/>
    </location>
</feature>
<feature type="transmembrane region" description="Helical" evidence="2">
    <location>
        <begin position="359"/>
        <end position="379"/>
    </location>
</feature>
<feature type="topological domain" description="Cytoplasmic" evidence="2">
    <location>
        <begin position="380"/>
        <end position="796"/>
    </location>
</feature>
<feature type="domain" description="Ig-like C2-type 1">
    <location>
        <begin position="21"/>
        <end position="119"/>
    </location>
</feature>
<feature type="domain" description="Ig-like C2-type 2">
    <location>
        <begin position="140"/>
        <end position="233"/>
    </location>
</feature>
<feature type="domain" description="Ig-like C2-type 3">
    <location>
        <begin position="239"/>
        <end position="344"/>
    </location>
</feature>
<feature type="domain" description="Protein kinase" evidence="4">
    <location>
        <begin position="457"/>
        <end position="746"/>
    </location>
</feature>
<feature type="region of interest" description="Disordered" evidence="6">
    <location>
        <begin position="117"/>
        <end position="142"/>
    </location>
</feature>
<feature type="compositionally biased region" description="Acidic residues" evidence="6">
    <location>
        <begin position="125"/>
        <end position="135"/>
    </location>
</feature>
<feature type="active site" description="Proton acceptor" evidence="4 5">
    <location>
        <position position="602"/>
    </location>
</feature>
<feature type="binding site" evidence="4">
    <location>
        <begin position="463"/>
        <end position="471"/>
    </location>
    <ligand>
        <name>ATP</name>
        <dbReference type="ChEBI" id="CHEBI:30616"/>
    </ligand>
</feature>
<feature type="binding site" evidence="4">
    <location>
        <position position="493"/>
    </location>
    <ligand>
        <name>ATP</name>
        <dbReference type="ChEBI" id="CHEBI:30616"/>
    </ligand>
</feature>
<feature type="modified residue" description="Phosphotyrosine; by autocatalysis" evidence="1">
    <location>
        <position position="632"/>
    </location>
</feature>
<feature type="modified residue" description="Phosphotyrosine; by autocatalysis" evidence="1">
    <location>
        <position position="633"/>
    </location>
</feature>
<feature type="modified residue" description="Phosphotyrosine; by autocatalysis" evidence="1">
    <location>
        <position position="709"/>
    </location>
</feature>
<feature type="modified residue" description="Phosphotyrosine; by autocatalysis" evidence="1">
    <location>
        <position position="745"/>
    </location>
</feature>
<feature type="glycosylation site" description="N-linked (GlcNAc...) asparagine" evidence="2">
    <location>
        <position position="91"/>
    </location>
</feature>
<feature type="glycosylation site" description="N-linked (GlcNAc...) asparagine" evidence="2">
    <location>
        <position position="113"/>
    </location>
</feature>
<feature type="glycosylation site" description="N-linked (GlcNAc...) asparagine" evidence="2">
    <location>
        <position position="214"/>
    </location>
</feature>
<feature type="glycosylation site" description="N-linked (GlcNAc...) asparagine" evidence="2">
    <location>
        <position position="251"/>
    </location>
</feature>
<feature type="glycosylation site" description="N-linked (GlcNAc...) asparagine" evidence="2">
    <location>
        <position position="283"/>
    </location>
</feature>
<feature type="glycosylation site" description="N-linked (GlcNAc...) asparagine" evidence="2">
    <location>
        <position position="304"/>
    </location>
</feature>
<feature type="glycosylation site" description="N-linked (GlcNAc...) asparagine" evidence="2">
    <location>
        <position position="317"/>
    </location>
</feature>
<feature type="disulfide bond" evidence="3">
    <location>
        <begin position="56"/>
        <end position="102"/>
    </location>
</feature>
<feature type="disulfide bond" evidence="3">
    <location>
        <begin position="165"/>
        <end position="217"/>
    </location>
</feature>
<feature type="disulfide bond" evidence="3">
    <location>
        <begin position="264"/>
        <end position="328"/>
    </location>
</feature>
<gene>
    <name type="primary">FGFR3</name>
</gene>
<accession>Q91287</accession>
<dbReference type="EC" id="2.7.10.1"/>
<dbReference type="EMBL" id="X75603">
    <property type="protein sequence ID" value="CAA53271.1"/>
    <property type="molecule type" value="mRNA"/>
</dbReference>
<dbReference type="PIR" id="S38579">
    <property type="entry name" value="S38579"/>
</dbReference>
<dbReference type="SMR" id="Q91287"/>
<dbReference type="GlyCosmos" id="Q91287">
    <property type="glycosylation" value="7 sites, No reported glycans"/>
</dbReference>
<dbReference type="GO" id="GO:0005886">
    <property type="term" value="C:plasma membrane"/>
    <property type="evidence" value="ECO:0007669"/>
    <property type="project" value="UniProtKB-SubCell"/>
</dbReference>
<dbReference type="GO" id="GO:0043235">
    <property type="term" value="C:receptor complex"/>
    <property type="evidence" value="ECO:0007669"/>
    <property type="project" value="TreeGrafter"/>
</dbReference>
<dbReference type="GO" id="GO:0005524">
    <property type="term" value="F:ATP binding"/>
    <property type="evidence" value="ECO:0007669"/>
    <property type="project" value="UniProtKB-KW"/>
</dbReference>
<dbReference type="GO" id="GO:0017134">
    <property type="term" value="F:fibroblast growth factor binding"/>
    <property type="evidence" value="ECO:0007669"/>
    <property type="project" value="TreeGrafter"/>
</dbReference>
<dbReference type="GO" id="GO:0005007">
    <property type="term" value="F:fibroblast growth factor receptor activity"/>
    <property type="evidence" value="ECO:0007669"/>
    <property type="project" value="InterPro"/>
</dbReference>
<dbReference type="GO" id="GO:0006915">
    <property type="term" value="P:apoptotic process"/>
    <property type="evidence" value="ECO:0007669"/>
    <property type="project" value="UniProtKB-KW"/>
</dbReference>
<dbReference type="GO" id="GO:0008284">
    <property type="term" value="P:positive regulation of cell population proliferation"/>
    <property type="evidence" value="ECO:0007669"/>
    <property type="project" value="InterPro"/>
</dbReference>
<dbReference type="GO" id="GO:0043410">
    <property type="term" value="P:positive regulation of MAPK cascade"/>
    <property type="evidence" value="ECO:0007669"/>
    <property type="project" value="TreeGrafter"/>
</dbReference>
<dbReference type="CDD" id="cd00096">
    <property type="entry name" value="Ig"/>
    <property type="match status" value="1"/>
</dbReference>
<dbReference type="CDD" id="cd05100">
    <property type="entry name" value="PTKc_FGFR3"/>
    <property type="match status" value="1"/>
</dbReference>
<dbReference type="FunFam" id="1.10.510.10:FF:000007">
    <property type="entry name" value="Fibroblast growth factor receptor"/>
    <property type="match status" value="1"/>
</dbReference>
<dbReference type="FunFam" id="2.60.40.10:FF:000016">
    <property type="entry name" value="Fibroblast growth factor receptor"/>
    <property type="match status" value="1"/>
</dbReference>
<dbReference type="FunFam" id="2.60.40.10:FF:000020">
    <property type="entry name" value="Fibroblast growth factor receptor"/>
    <property type="match status" value="1"/>
</dbReference>
<dbReference type="FunFam" id="2.60.40.10:FF:000423">
    <property type="entry name" value="Fibroblast growth factor receptor"/>
    <property type="match status" value="1"/>
</dbReference>
<dbReference type="FunFam" id="3.30.200.20:FF:000011">
    <property type="entry name" value="Fibroblast growth factor receptor"/>
    <property type="match status" value="1"/>
</dbReference>
<dbReference type="Gene3D" id="2.60.40.10">
    <property type="entry name" value="Immunoglobulins"/>
    <property type="match status" value="3"/>
</dbReference>
<dbReference type="Gene3D" id="3.30.200.20">
    <property type="entry name" value="Phosphorylase Kinase, domain 1"/>
    <property type="match status" value="1"/>
</dbReference>
<dbReference type="Gene3D" id="1.10.510.10">
    <property type="entry name" value="Transferase(Phosphotransferase) domain 1"/>
    <property type="match status" value="1"/>
</dbReference>
<dbReference type="InterPro" id="IPR016248">
    <property type="entry name" value="FGF_rcpt_fam"/>
</dbReference>
<dbReference type="InterPro" id="IPR007110">
    <property type="entry name" value="Ig-like_dom"/>
</dbReference>
<dbReference type="InterPro" id="IPR036179">
    <property type="entry name" value="Ig-like_dom_sf"/>
</dbReference>
<dbReference type="InterPro" id="IPR013783">
    <property type="entry name" value="Ig-like_fold"/>
</dbReference>
<dbReference type="InterPro" id="IPR013098">
    <property type="entry name" value="Ig_I-set"/>
</dbReference>
<dbReference type="InterPro" id="IPR003599">
    <property type="entry name" value="Ig_sub"/>
</dbReference>
<dbReference type="InterPro" id="IPR003598">
    <property type="entry name" value="Ig_sub2"/>
</dbReference>
<dbReference type="InterPro" id="IPR011009">
    <property type="entry name" value="Kinase-like_dom_sf"/>
</dbReference>
<dbReference type="InterPro" id="IPR000719">
    <property type="entry name" value="Prot_kinase_dom"/>
</dbReference>
<dbReference type="InterPro" id="IPR017441">
    <property type="entry name" value="Protein_kinase_ATP_BS"/>
</dbReference>
<dbReference type="InterPro" id="IPR050122">
    <property type="entry name" value="RTK"/>
</dbReference>
<dbReference type="InterPro" id="IPR001245">
    <property type="entry name" value="Ser-Thr/Tyr_kinase_cat_dom"/>
</dbReference>
<dbReference type="InterPro" id="IPR008266">
    <property type="entry name" value="Tyr_kinase_AS"/>
</dbReference>
<dbReference type="InterPro" id="IPR020635">
    <property type="entry name" value="Tyr_kinase_cat_dom"/>
</dbReference>
<dbReference type="PANTHER" id="PTHR24416:SF505">
    <property type="entry name" value="FIBROBLAST GROWTH FACTOR RECEPTOR 3"/>
    <property type="match status" value="1"/>
</dbReference>
<dbReference type="PANTHER" id="PTHR24416">
    <property type="entry name" value="TYROSINE-PROTEIN KINASE RECEPTOR"/>
    <property type="match status" value="1"/>
</dbReference>
<dbReference type="Pfam" id="PF07679">
    <property type="entry name" value="I-set"/>
    <property type="match status" value="2"/>
</dbReference>
<dbReference type="Pfam" id="PF13927">
    <property type="entry name" value="Ig_3"/>
    <property type="match status" value="1"/>
</dbReference>
<dbReference type="Pfam" id="PF07714">
    <property type="entry name" value="PK_Tyr_Ser-Thr"/>
    <property type="match status" value="1"/>
</dbReference>
<dbReference type="PIRSF" id="PIRSF000628">
    <property type="entry name" value="FGFR"/>
    <property type="match status" value="1"/>
</dbReference>
<dbReference type="PRINTS" id="PR00109">
    <property type="entry name" value="TYRKINASE"/>
</dbReference>
<dbReference type="SMART" id="SM00409">
    <property type="entry name" value="IG"/>
    <property type="match status" value="3"/>
</dbReference>
<dbReference type="SMART" id="SM00408">
    <property type="entry name" value="IGc2"/>
    <property type="match status" value="3"/>
</dbReference>
<dbReference type="SMART" id="SM00219">
    <property type="entry name" value="TyrKc"/>
    <property type="match status" value="1"/>
</dbReference>
<dbReference type="SUPFAM" id="SSF48726">
    <property type="entry name" value="Immunoglobulin"/>
    <property type="match status" value="3"/>
</dbReference>
<dbReference type="SUPFAM" id="SSF56112">
    <property type="entry name" value="Protein kinase-like (PK-like)"/>
    <property type="match status" value="1"/>
</dbReference>
<dbReference type="PROSITE" id="PS50835">
    <property type="entry name" value="IG_LIKE"/>
    <property type="match status" value="3"/>
</dbReference>
<dbReference type="PROSITE" id="PS00107">
    <property type="entry name" value="PROTEIN_KINASE_ATP"/>
    <property type="match status" value="1"/>
</dbReference>
<dbReference type="PROSITE" id="PS50011">
    <property type="entry name" value="PROTEIN_KINASE_DOM"/>
    <property type="match status" value="1"/>
</dbReference>
<dbReference type="PROSITE" id="PS00109">
    <property type="entry name" value="PROTEIN_KINASE_TYR"/>
    <property type="match status" value="1"/>
</dbReference>
<proteinExistence type="evidence at transcript level"/>
<sequence length="796" mass="88289">MLVWLCGLCLVTLAGGRSAARLPLTEGRPTADFLPGDASLVEELLFGTGDTIELSCTTPGSSVSVVWFKDGISVDPPTWSHTGQKLLKIINVSYDDSGVYSCKARQSSEVLRNVTVRVTDSPSSGDDEDDDEESESANAPKFTRPEWMEKKLLAVPAANTVRFRCPAAGKPTPSITWLKNGKEFKGEHRIGGIKLRHQQWSLVMESVVPSDRGNYTCVVANKYGTIRETYTLDVLERTPHRPILQAGFRSNKTVVVGSDVEFHCKVYSDAQPHIQWLKHVEVNGSKFGPDGNPYVTVLKTAGVNTSDKELEIQFLRNVTFEDAGEYTCLAGNSIGYSHHSAWLTVLPPAEPVPDVDTSVSILAAAGCVAVVILVVIIIFTYKMKMPSKKTMNTATVHKVSKFPLKRQVSLESNSSMNSNTPLVRITRLSSSDGPMLANVSELELPADPKWELSRSRLTLGKPLGEGCFGQVVMADAVGIEKDKPNKATSVAVKMLKDDATDKDLSDLVSEMEMMKMIGKHKNIINLLGACTQDGPLYVLVEYASKGNLREYLRARRPPGMDYSFDTCKLPEEQLTFKDLVSCAYQVARGMEYLASQKCIHRDLAARNVLVTDDNVMKIADFGLARDVHNIDYYKKTTNGRLPVKWMAPEALFDRVYTHQSDVWSFGVLLWEIFTLGGSPYPGIPVEELFKLLKEGHRMDKPANCTHELYMIMRECWHAVPSQRPTFKQLVEDLDRVLTVTSTDEYLDLSVPFEQYSPACPDSHSSCSSGDDSVFAHDLPEEPCLPKHQQYNGVIRT</sequence>
<reference key="1">
    <citation type="journal article" date="1994" name="J. Cell Sci.">
        <title>Isolation and developmental expression of the amphibian homolog of the fibroblast growth factor receptor 3.</title>
        <authorList>
            <person name="Shi D.-L."/>
            <person name="Fromentoux V."/>
            <person name="Launay C."/>
            <person name="Umbhauer M."/>
            <person name="Boucaut J.-C."/>
        </authorList>
    </citation>
    <scope>NUCLEOTIDE SEQUENCE [MRNA]</scope>
    <scope>DEVELOPMENTAL STAGE</scope>
</reference>
<comment type="function">
    <text evidence="1">Tyrosine-protein kinase that acts as a cell-surface receptor for fibroblast growth factors and plays an essential role in the regulation of cell proliferation, differentiation and apoptosis. Plays an essential role in the regulation of chondrocyte differentiation, proliferation and apoptosis, and is required for normal skeleton development. Regulates both osteogenesis and postnatal bone mineralization by osteoblasts. Promotes apoptosis in chondrocytes, but can also promote cancer cell proliferation. Phosphorylates PLCG1, CBL and FRS2. Ligand binding leads to the activation of several signaling cascades. Activation of PLCG1 leads to the production of the cellular signaling molecules diacylglycerol and inositol 1,4,5-trisphosphate. Phosphorylation of FRS2 triggers recruitment of GRB2, GAB1, PIK3R1 and SOS1, and mediates activation of RAS, MAPK1/ERK2, MAPK3/ERK1 and the MAP kinase signaling pathway, as well as of the AKT1 signaling pathway (By similarity).</text>
</comment>
<comment type="catalytic activity">
    <reaction evidence="5">
        <text>L-tyrosyl-[protein] + ATP = O-phospho-L-tyrosyl-[protein] + ADP + H(+)</text>
        <dbReference type="Rhea" id="RHEA:10596"/>
        <dbReference type="Rhea" id="RHEA-COMP:10136"/>
        <dbReference type="Rhea" id="RHEA-COMP:20101"/>
        <dbReference type="ChEBI" id="CHEBI:15378"/>
        <dbReference type="ChEBI" id="CHEBI:30616"/>
        <dbReference type="ChEBI" id="CHEBI:46858"/>
        <dbReference type="ChEBI" id="CHEBI:61978"/>
        <dbReference type="ChEBI" id="CHEBI:456216"/>
        <dbReference type="EC" id="2.7.10.1"/>
    </reaction>
</comment>
<comment type="activity regulation">
    <text evidence="1">Present in an inactive conformation in the absence of bound ligand. Ligand binding leads to dimerization and activation by autophosphorylation on tyrosine residues (By similarity).</text>
</comment>
<comment type="subunit">
    <text evidence="1">Monomer. Homodimer after ligand binding (By similarity).</text>
</comment>
<comment type="subcellular location">
    <subcellularLocation>
        <location evidence="1">Cell membrane</location>
        <topology evidence="1">Single-pass type I membrane protein</topology>
    </subcellularLocation>
</comment>
<comment type="tissue specificity">
    <text>Undetectable in the adult skeletal muscle. Low levels of expression were detected in the liver, lung and kidney. Medium levels of expression were detected in the heart, spleen, intestine and eye. Highest expression is observed in the testis.</text>
</comment>
<comment type="developmental stage">
    <text evidence="7">Maternally transcript whose a low level of expression persists during the cleavage and gastrula stages and a significant increase was observed at the end of the gastrula stage. Mainly localized to the ectoderm at the early gastrula stage and then shifted to the embryonic neural tissues, whereas adult brain had decreased levels of expression. Strong expression in the germinal epithelium of the embryonic brain (especially the diencephalon and rhombencephalon) and neural tube, in the lens and the cranial ganglia. The epithelium of the developing gut, like the pharynx and esophagus, also prominently expressed it. Other sites of expression were found in the liver and in the mesenchymal condensation sites of branchial arches.</text>
</comment>
<comment type="domain">
    <text evidence="1">The second and third Ig-like domains directly interact with fibroblast growth factors (FGF) and heparan sulfate proteoglycans.</text>
</comment>
<comment type="PTM">
    <text evidence="1">Autophosphorylated. Binding of FGF family members together with heparan sulfate proteoglycan or heparin promotes receptor dimerization and autophosphorylation on tyrosine residues. Autophosphorylation occurs in trans between the two FGFR molecules present in the dimer (By similarity).</text>
</comment>
<comment type="similarity">
    <text evidence="4">Belongs to the protein kinase superfamily. Tyr protein kinase family. Fibroblast growth factor receptor subfamily.</text>
</comment>
<protein>
    <recommendedName>
        <fullName>Fibroblast growth factor receptor 3</fullName>
        <shortName>FGFR-3</shortName>
        <ecNumber>2.7.10.1</ecNumber>
    </recommendedName>
    <alternativeName>
        <fullName>PFR3</fullName>
    </alternativeName>
</protein>
<evidence type="ECO:0000250" key="1"/>
<evidence type="ECO:0000255" key="2"/>
<evidence type="ECO:0000255" key="3">
    <source>
        <dbReference type="PROSITE-ProRule" id="PRU00114"/>
    </source>
</evidence>
<evidence type="ECO:0000255" key="4">
    <source>
        <dbReference type="PROSITE-ProRule" id="PRU00159"/>
    </source>
</evidence>
<evidence type="ECO:0000255" key="5">
    <source>
        <dbReference type="PROSITE-ProRule" id="PRU10028"/>
    </source>
</evidence>
<evidence type="ECO:0000256" key="6">
    <source>
        <dbReference type="SAM" id="MobiDB-lite"/>
    </source>
</evidence>
<evidence type="ECO:0000269" key="7">
    <source>
    </source>
</evidence>
<organism>
    <name type="scientific">Pleurodeles waltl</name>
    <name type="common">Iberian ribbed newt</name>
    <dbReference type="NCBI Taxonomy" id="8319"/>
    <lineage>
        <taxon>Eukaryota</taxon>
        <taxon>Metazoa</taxon>
        <taxon>Chordata</taxon>
        <taxon>Craniata</taxon>
        <taxon>Vertebrata</taxon>
        <taxon>Euteleostomi</taxon>
        <taxon>Amphibia</taxon>
        <taxon>Batrachia</taxon>
        <taxon>Caudata</taxon>
        <taxon>Salamandroidea</taxon>
        <taxon>Salamandridae</taxon>
        <taxon>Pleurodelinae</taxon>
        <taxon>Pleurodeles</taxon>
    </lineage>
</organism>